<keyword id="KW-1003">Cell membrane</keyword>
<keyword id="KW-0472">Membrane</keyword>
<keyword id="KW-0653">Protein transport</keyword>
<keyword id="KW-1185">Reference proteome</keyword>
<keyword id="KW-0811">Translocation</keyword>
<keyword id="KW-0812">Transmembrane</keyword>
<keyword id="KW-1133">Transmembrane helix</keyword>
<keyword id="KW-0813">Transport</keyword>
<reference key="1">
    <citation type="journal article" date="1991" name="Mol. Microbiol.">
        <title>A gene in the archaebacterium Sulfolobus solfataricus that codes for a protein equivalent to the alpha subunits of the signal recognition particle receptor in eukaryotes.</title>
        <authorList>
            <person name="Ramirez C."/>
            <person name="Matheson A.T."/>
        </authorList>
    </citation>
    <scope>NUCLEOTIDE SEQUENCE [GENOMIC DNA]</scope>
</reference>
<reference key="2">
    <citation type="journal article" date="1995" name="Biochim. Biophys. Acta">
        <title>Nucleotide sequence of a gene cluster encoding ribosomal proteins in the thermoacidophilic crenarchaeon Sulfolobus acidocaldarius.</title>
        <authorList>
            <person name="Moll R."/>
            <person name="Schmidtke S."/>
            <person name="Schaefer G."/>
        </authorList>
    </citation>
    <scope>NUCLEOTIDE SEQUENCE [GENOMIC DNA]</scope>
    <source>
        <strain>ATCC 33909 / DSM 639 / JCM 8929 / NBRC 15157 / NCIMB 11770</strain>
    </source>
</reference>
<reference key="3">
    <citation type="journal article" date="2005" name="J. Bacteriol.">
        <title>The genome of Sulfolobus acidocaldarius, a model organism of the Crenarchaeota.</title>
        <authorList>
            <person name="Chen L."/>
            <person name="Bruegger K."/>
            <person name="Skovgaard M."/>
            <person name="Redder P."/>
            <person name="She Q."/>
            <person name="Torarinsson E."/>
            <person name="Greve B."/>
            <person name="Awayez M."/>
            <person name="Zibat A."/>
            <person name="Klenk H.-P."/>
            <person name="Garrett R.A."/>
        </authorList>
    </citation>
    <scope>NUCLEOTIDE SEQUENCE [LARGE SCALE GENOMIC DNA]</scope>
    <source>
        <strain>ATCC 33909 / DSM 639 / JCM 8929 / NBRC 15157 / NCIMB 11770</strain>
    </source>
</reference>
<feature type="chain" id="PRO_0000104228" description="Protein translocase subunit SecE">
    <location>
        <begin position="1"/>
        <end position="65"/>
    </location>
</feature>
<feature type="transmembrane region" description="Helical" evidence="1">
    <location>
        <begin position="44"/>
        <end position="64"/>
    </location>
</feature>
<accession>P27340</accession>
<accession>Q4J8U8</accession>
<name>SECE_SULAC</name>
<proteinExistence type="inferred from homology"/>
<protein>
    <recommendedName>
        <fullName evidence="1">Protein translocase subunit SecE</fullName>
    </recommendedName>
    <alternativeName>
        <fullName evidence="1">Protein transport protein Sec61 gamma subunit homolog</fullName>
    </alternativeName>
</protein>
<gene>
    <name evidence="1" type="primary">secE</name>
    <name type="ordered locus">Saci_1461</name>
</gene>
<evidence type="ECO:0000255" key="1">
    <source>
        <dbReference type="HAMAP-Rule" id="MF_00422"/>
    </source>
</evidence>
<evidence type="ECO:0000305" key="2">
    <source>
    </source>
</evidence>
<sequence>MKVFSIMKISDIIKRLREDWKRIISVAKKPDKDSFNYSIRLTLLVMAVVGLIAYIVQLTTSLIIR</sequence>
<comment type="function">
    <text evidence="1">Essential subunit of the Sec protein translocation channel SecYEG. Clamps together the 2 halves of SecY. May contact the channel plug during translocation.</text>
</comment>
<comment type="subunit">
    <text evidence="1">Component of the Sec protein translocase complex. Heterotrimer consisting of SecY (alpha), SecG (beta) and SecE (gamma) subunits. The heterotrimers can form oligomers, although 1 heterotrimer is thought to be able to translocate proteins. Interacts with the ribosome. May interact with SecDF, and other proteins may be involved.</text>
</comment>
<comment type="subcellular location">
    <subcellularLocation>
        <location evidence="1">Cell membrane</location>
        <topology evidence="1">Single-pass membrane protein</topology>
    </subcellularLocation>
</comment>
<comment type="similarity">
    <text evidence="1">Belongs to the SecE/SEC61-gamma family.</text>
</comment>
<comment type="caution">
    <text evidence="2">Was originally thought to originate from S.solfataricus strain P1, but the culture was contaminated with S.acidocaldarius.</text>
</comment>
<organism>
    <name type="scientific">Sulfolobus acidocaldarius (strain ATCC 33909 / DSM 639 / JCM 8929 / NBRC 15157 / NCIMB 11770)</name>
    <dbReference type="NCBI Taxonomy" id="330779"/>
    <lineage>
        <taxon>Archaea</taxon>
        <taxon>Thermoproteota</taxon>
        <taxon>Thermoprotei</taxon>
        <taxon>Sulfolobales</taxon>
        <taxon>Sulfolobaceae</taxon>
        <taxon>Sulfolobus</taxon>
    </lineage>
</organism>
<dbReference type="EMBL" id="X58538">
    <property type="protein sequence ID" value="CAA41430.1"/>
    <property type="molecule type" value="Genomic_DNA"/>
</dbReference>
<dbReference type="EMBL" id="X77509">
    <property type="protein sequence ID" value="CAA54644.1"/>
    <property type="molecule type" value="Genomic_DNA"/>
</dbReference>
<dbReference type="EMBL" id="CP000077">
    <property type="protein sequence ID" value="AAY80782.1"/>
    <property type="molecule type" value="Genomic_DNA"/>
</dbReference>
<dbReference type="PIR" id="S53704">
    <property type="entry name" value="S53704"/>
</dbReference>
<dbReference type="RefSeq" id="WP_011278284.1">
    <property type="nucleotide sequence ID" value="NC_007181.1"/>
</dbReference>
<dbReference type="SMR" id="P27340"/>
<dbReference type="STRING" id="330779.Saci_1461"/>
<dbReference type="GeneID" id="14551956"/>
<dbReference type="KEGG" id="sai:Saci_1461"/>
<dbReference type="PATRIC" id="fig|330779.12.peg.1405"/>
<dbReference type="eggNOG" id="arCOG02204">
    <property type="taxonomic scope" value="Archaea"/>
</dbReference>
<dbReference type="HOGENOM" id="CLU_191921_1_0_2"/>
<dbReference type="Proteomes" id="UP000001018">
    <property type="component" value="Chromosome"/>
</dbReference>
<dbReference type="GO" id="GO:0005886">
    <property type="term" value="C:plasma membrane"/>
    <property type="evidence" value="ECO:0007669"/>
    <property type="project" value="UniProtKB-SubCell"/>
</dbReference>
<dbReference type="GO" id="GO:0008320">
    <property type="term" value="F:protein transmembrane transporter activity"/>
    <property type="evidence" value="ECO:0007669"/>
    <property type="project" value="UniProtKB-UniRule"/>
</dbReference>
<dbReference type="GO" id="GO:0065002">
    <property type="term" value="P:intracellular protein transmembrane transport"/>
    <property type="evidence" value="ECO:0007669"/>
    <property type="project" value="UniProtKB-UniRule"/>
</dbReference>
<dbReference type="GO" id="GO:0009306">
    <property type="term" value="P:protein secretion"/>
    <property type="evidence" value="ECO:0007669"/>
    <property type="project" value="UniProtKB-UniRule"/>
</dbReference>
<dbReference type="GO" id="GO:0006605">
    <property type="term" value="P:protein targeting"/>
    <property type="evidence" value="ECO:0007669"/>
    <property type="project" value="UniProtKB-UniRule"/>
</dbReference>
<dbReference type="Gene3D" id="1.20.5.820">
    <property type="entry name" value="Preprotein translocase SecE subunit"/>
    <property type="match status" value="1"/>
</dbReference>
<dbReference type="HAMAP" id="MF_00422">
    <property type="entry name" value="SecE"/>
    <property type="match status" value="1"/>
</dbReference>
<dbReference type="InterPro" id="IPR023391">
    <property type="entry name" value="Prot_translocase_SecE_dom_sf"/>
</dbReference>
<dbReference type="InterPro" id="IPR008158">
    <property type="entry name" value="Translocase_Sec61-g"/>
</dbReference>
<dbReference type="InterPro" id="IPR001901">
    <property type="entry name" value="Translocase_SecE/Sec61-g"/>
</dbReference>
<dbReference type="NCBIfam" id="NF006906">
    <property type="entry name" value="PRK09400.1-1"/>
    <property type="match status" value="1"/>
</dbReference>
<dbReference type="NCBIfam" id="TIGR00327">
    <property type="entry name" value="secE_euk_arch"/>
    <property type="match status" value="1"/>
</dbReference>
<dbReference type="SUPFAM" id="SSF103456">
    <property type="entry name" value="Preprotein translocase SecE subunit"/>
    <property type="match status" value="1"/>
</dbReference>
<dbReference type="PROSITE" id="PS01067">
    <property type="entry name" value="SECE_SEC61G"/>
    <property type="match status" value="1"/>
</dbReference>